<comment type="function">
    <text evidence="1">Catalyzes the formation of S-adenosylmethionine (AdoMet) from methionine and ATP. The overall synthetic reaction is composed of two sequential steps, AdoMet formation and the subsequent tripolyphosphate hydrolysis which occurs prior to release of AdoMet from the enzyme.</text>
</comment>
<comment type="catalytic activity">
    <reaction evidence="1">
        <text>L-methionine + ATP + H2O = S-adenosyl-L-methionine + phosphate + diphosphate</text>
        <dbReference type="Rhea" id="RHEA:21080"/>
        <dbReference type="ChEBI" id="CHEBI:15377"/>
        <dbReference type="ChEBI" id="CHEBI:30616"/>
        <dbReference type="ChEBI" id="CHEBI:33019"/>
        <dbReference type="ChEBI" id="CHEBI:43474"/>
        <dbReference type="ChEBI" id="CHEBI:57844"/>
        <dbReference type="ChEBI" id="CHEBI:59789"/>
        <dbReference type="EC" id="2.5.1.6"/>
    </reaction>
</comment>
<comment type="cofactor">
    <cofactor evidence="1">
        <name>Mg(2+)</name>
        <dbReference type="ChEBI" id="CHEBI:18420"/>
    </cofactor>
    <text evidence="1">Binds 2 divalent ions per subunit.</text>
</comment>
<comment type="cofactor">
    <cofactor evidence="1">
        <name>K(+)</name>
        <dbReference type="ChEBI" id="CHEBI:29103"/>
    </cofactor>
    <text evidence="1">Binds 1 potassium ion per subunit.</text>
</comment>
<comment type="pathway">
    <text evidence="1">Amino-acid biosynthesis; S-adenosyl-L-methionine biosynthesis; S-adenosyl-L-methionine from L-methionine: step 1/1.</text>
</comment>
<comment type="subunit">
    <text evidence="1">Homotetramer; dimer of dimers.</text>
</comment>
<comment type="subcellular location">
    <subcellularLocation>
        <location evidence="1">Cytoplasm</location>
    </subcellularLocation>
</comment>
<comment type="similarity">
    <text evidence="1">Belongs to the AdoMet synthase family.</text>
</comment>
<keyword id="KW-0067">ATP-binding</keyword>
<keyword id="KW-0963">Cytoplasm</keyword>
<keyword id="KW-0460">Magnesium</keyword>
<keyword id="KW-0479">Metal-binding</keyword>
<keyword id="KW-0547">Nucleotide-binding</keyword>
<keyword id="KW-0554">One-carbon metabolism</keyword>
<keyword id="KW-0630">Potassium</keyword>
<keyword id="KW-1185">Reference proteome</keyword>
<keyword id="KW-0808">Transferase</keyword>
<evidence type="ECO:0000255" key="1">
    <source>
        <dbReference type="HAMAP-Rule" id="MF_00086"/>
    </source>
</evidence>
<reference key="1">
    <citation type="submission" date="2009-01" db="EMBL/GenBank/DDBJ databases">
        <title>Complete sequence of Clostridium cellulolyticum H10.</title>
        <authorList>
            <consortium name="US DOE Joint Genome Institute"/>
            <person name="Lucas S."/>
            <person name="Copeland A."/>
            <person name="Lapidus A."/>
            <person name="Glavina del Rio T."/>
            <person name="Dalin E."/>
            <person name="Tice H."/>
            <person name="Bruce D."/>
            <person name="Goodwin L."/>
            <person name="Pitluck S."/>
            <person name="Chertkov O."/>
            <person name="Saunders E."/>
            <person name="Brettin T."/>
            <person name="Detter J.C."/>
            <person name="Han C."/>
            <person name="Larimer F."/>
            <person name="Land M."/>
            <person name="Hauser L."/>
            <person name="Kyrpides N."/>
            <person name="Ivanova N."/>
            <person name="Zhou J."/>
            <person name="Richardson P."/>
        </authorList>
    </citation>
    <scope>NUCLEOTIDE SEQUENCE [LARGE SCALE GENOMIC DNA]</scope>
    <source>
        <strain>ATCC 35319 / DSM 5812 / JCM 6584 / H10</strain>
    </source>
</reference>
<dbReference type="EC" id="2.5.1.6" evidence="1"/>
<dbReference type="EMBL" id="CP001348">
    <property type="protein sequence ID" value="ACL74475.1"/>
    <property type="molecule type" value="Genomic_DNA"/>
</dbReference>
<dbReference type="RefSeq" id="WP_012634541.1">
    <property type="nucleotide sequence ID" value="NC_011898.1"/>
</dbReference>
<dbReference type="SMR" id="B8I4C1"/>
<dbReference type="STRING" id="394503.Ccel_0087"/>
<dbReference type="KEGG" id="cce:Ccel_0087"/>
<dbReference type="eggNOG" id="COG0192">
    <property type="taxonomic scope" value="Bacteria"/>
</dbReference>
<dbReference type="HOGENOM" id="CLU_041802_1_1_9"/>
<dbReference type="OrthoDB" id="9801686at2"/>
<dbReference type="UniPathway" id="UPA00315">
    <property type="reaction ID" value="UER00080"/>
</dbReference>
<dbReference type="Proteomes" id="UP000001349">
    <property type="component" value="Chromosome"/>
</dbReference>
<dbReference type="GO" id="GO:0005737">
    <property type="term" value="C:cytoplasm"/>
    <property type="evidence" value="ECO:0007669"/>
    <property type="project" value="UniProtKB-SubCell"/>
</dbReference>
<dbReference type="GO" id="GO:0005524">
    <property type="term" value="F:ATP binding"/>
    <property type="evidence" value="ECO:0007669"/>
    <property type="project" value="UniProtKB-UniRule"/>
</dbReference>
<dbReference type="GO" id="GO:0000287">
    <property type="term" value="F:magnesium ion binding"/>
    <property type="evidence" value="ECO:0007669"/>
    <property type="project" value="UniProtKB-UniRule"/>
</dbReference>
<dbReference type="GO" id="GO:0004478">
    <property type="term" value="F:methionine adenosyltransferase activity"/>
    <property type="evidence" value="ECO:0007669"/>
    <property type="project" value="UniProtKB-UniRule"/>
</dbReference>
<dbReference type="GO" id="GO:0006730">
    <property type="term" value="P:one-carbon metabolic process"/>
    <property type="evidence" value="ECO:0007669"/>
    <property type="project" value="UniProtKB-KW"/>
</dbReference>
<dbReference type="GO" id="GO:0006556">
    <property type="term" value="P:S-adenosylmethionine biosynthetic process"/>
    <property type="evidence" value="ECO:0007669"/>
    <property type="project" value="UniProtKB-UniRule"/>
</dbReference>
<dbReference type="CDD" id="cd18079">
    <property type="entry name" value="S-AdoMet_synt"/>
    <property type="match status" value="1"/>
</dbReference>
<dbReference type="FunFam" id="3.30.300.10:FF:000003">
    <property type="entry name" value="S-adenosylmethionine synthase"/>
    <property type="match status" value="1"/>
</dbReference>
<dbReference type="FunFam" id="3.30.300.10:FF:000004">
    <property type="entry name" value="S-adenosylmethionine synthase"/>
    <property type="match status" value="1"/>
</dbReference>
<dbReference type="Gene3D" id="3.30.300.10">
    <property type="match status" value="3"/>
</dbReference>
<dbReference type="HAMAP" id="MF_00086">
    <property type="entry name" value="S_AdoMet_synth1"/>
    <property type="match status" value="1"/>
</dbReference>
<dbReference type="InterPro" id="IPR022631">
    <property type="entry name" value="ADOMET_SYNTHASE_CS"/>
</dbReference>
<dbReference type="InterPro" id="IPR022630">
    <property type="entry name" value="S-AdoMet_synt_C"/>
</dbReference>
<dbReference type="InterPro" id="IPR022629">
    <property type="entry name" value="S-AdoMet_synt_central"/>
</dbReference>
<dbReference type="InterPro" id="IPR022628">
    <property type="entry name" value="S-AdoMet_synt_N"/>
</dbReference>
<dbReference type="InterPro" id="IPR002133">
    <property type="entry name" value="S-AdoMet_synthetase"/>
</dbReference>
<dbReference type="InterPro" id="IPR022636">
    <property type="entry name" value="S-AdoMet_synthetase_sfam"/>
</dbReference>
<dbReference type="NCBIfam" id="TIGR01034">
    <property type="entry name" value="metK"/>
    <property type="match status" value="1"/>
</dbReference>
<dbReference type="PANTHER" id="PTHR11964">
    <property type="entry name" value="S-ADENOSYLMETHIONINE SYNTHETASE"/>
    <property type="match status" value="1"/>
</dbReference>
<dbReference type="Pfam" id="PF02773">
    <property type="entry name" value="S-AdoMet_synt_C"/>
    <property type="match status" value="1"/>
</dbReference>
<dbReference type="Pfam" id="PF02772">
    <property type="entry name" value="S-AdoMet_synt_M"/>
    <property type="match status" value="1"/>
</dbReference>
<dbReference type="Pfam" id="PF00438">
    <property type="entry name" value="S-AdoMet_synt_N"/>
    <property type="match status" value="1"/>
</dbReference>
<dbReference type="PIRSF" id="PIRSF000497">
    <property type="entry name" value="MAT"/>
    <property type="match status" value="1"/>
</dbReference>
<dbReference type="SUPFAM" id="SSF55973">
    <property type="entry name" value="S-adenosylmethionine synthetase"/>
    <property type="match status" value="3"/>
</dbReference>
<dbReference type="PROSITE" id="PS00376">
    <property type="entry name" value="ADOMET_SYNTHASE_1"/>
    <property type="match status" value="1"/>
</dbReference>
<dbReference type="PROSITE" id="PS00377">
    <property type="entry name" value="ADOMET_SYNTHASE_2"/>
    <property type="match status" value="1"/>
</dbReference>
<proteinExistence type="inferred from homology"/>
<name>METK_RUMCH</name>
<feature type="chain" id="PRO_1000196698" description="S-adenosylmethionine synthase">
    <location>
        <begin position="1"/>
        <end position="396"/>
    </location>
</feature>
<feature type="region of interest" description="Flexible loop" evidence="1">
    <location>
        <begin position="99"/>
        <end position="109"/>
    </location>
</feature>
<feature type="binding site" description="in other chain" evidence="1">
    <location>
        <position position="15"/>
    </location>
    <ligand>
        <name>ATP</name>
        <dbReference type="ChEBI" id="CHEBI:30616"/>
        <note>ligand shared between two neighboring subunits</note>
    </ligand>
</feature>
<feature type="binding site" evidence="1">
    <location>
        <position position="17"/>
    </location>
    <ligand>
        <name>Mg(2+)</name>
        <dbReference type="ChEBI" id="CHEBI:18420"/>
    </ligand>
</feature>
<feature type="binding site" evidence="1">
    <location>
        <position position="43"/>
    </location>
    <ligand>
        <name>K(+)</name>
        <dbReference type="ChEBI" id="CHEBI:29103"/>
    </ligand>
</feature>
<feature type="binding site" description="in other chain" evidence="1">
    <location>
        <position position="56"/>
    </location>
    <ligand>
        <name>L-methionine</name>
        <dbReference type="ChEBI" id="CHEBI:57844"/>
        <note>ligand shared between two neighboring subunits</note>
    </ligand>
</feature>
<feature type="binding site" description="in other chain" evidence="1">
    <location>
        <position position="99"/>
    </location>
    <ligand>
        <name>L-methionine</name>
        <dbReference type="ChEBI" id="CHEBI:57844"/>
        <note>ligand shared between two neighboring subunits</note>
    </ligand>
</feature>
<feature type="binding site" description="in other chain" evidence="1">
    <location>
        <begin position="175"/>
        <end position="177"/>
    </location>
    <ligand>
        <name>ATP</name>
        <dbReference type="ChEBI" id="CHEBI:30616"/>
        <note>ligand shared between two neighboring subunits</note>
    </ligand>
</feature>
<feature type="binding site" description="in other chain" evidence="1">
    <location>
        <begin position="241"/>
        <end position="242"/>
    </location>
    <ligand>
        <name>ATP</name>
        <dbReference type="ChEBI" id="CHEBI:30616"/>
        <note>ligand shared between two neighboring subunits</note>
    </ligand>
</feature>
<feature type="binding site" evidence="1">
    <location>
        <position position="250"/>
    </location>
    <ligand>
        <name>ATP</name>
        <dbReference type="ChEBI" id="CHEBI:30616"/>
        <note>ligand shared between two neighboring subunits</note>
    </ligand>
</feature>
<feature type="binding site" evidence="1">
    <location>
        <position position="250"/>
    </location>
    <ligand>
        <name>L-methionine</name>
        <dbReference type="ChEBI" id="CHEBI:57844"/>
        <note>ligand shared between two neighboring subunits</note>
    </ligand>
</feature>
<feature type="binding site" description="in other chain" evidence="1">
    <location>
        <begin position="256"/>
        <end position="257"/>
    </location>
    <ligand>
        <name>ATP</name>
        <dbReference type="ChEBI" id="CHEBI:30616"/>
        <note>ligand shared between two neighboring subunits</note>
    </ligand>
</feature>
<feature type="binding site" evidence="1">
    <location>
        <position position="273"/>
    </location>
    <ligand>
        <name>ATP</name>
        <dbReference type="ChEBI" id="CHEBI:30616"/>
        <note>ligand shared between two neighboring subunits</note>
    </ligand>
</feature>
<feature type="binding site" evidence="1">
    <location>
        <position position="277"/>
    </location>
    <ligand>
        <name>ATP</name>
        <dbReference type="ChEBI" id="CHEBI:30616"/>
        <note>ligand shared between two neighboring subunits</note>
    </ligand>
</feature>
<feature type="binding site" description="in other chain" evidence="1">
    <location>
        <position position="281"/>
    </location>
    <ligand>
        <name>L-methionine</name>
        <dbReference type="ChEBI" id="CHEBI:57844"/>
        <note>ligand shared between two neighboring subunits</note>
    </ligand>
</feature>
<organism>
    <name type="scientific">Ruminiclostridium cellulolyticum (strain ATCC 35319 / DSM 5812 / JCM 6584 / H10)</name>
    <name type="common">Clostridium cellulolyticum</name>
    <dbReference type="NCBI Taxonomy" id="394503"/>
    <lineage>
        <taxon>Bacteria</taxon>
        <taxon>Bacillati</taxon>
        <taxon>Bacillota</taxon>
        <taxon>Clostridia</taxon>
        <taxon>Eubacteriales</taxon>
        <taxon>Oscillospiraceae</taxon>
        <taxon>Ruminiclostridium</taxon>
    </lineage>
</organism>
<sequence length="396" mass="43279">MTKRLFTSESVTEGHPDKICDQISDAVLDAIYEKDPQARVACETAVTTGMVMVMGEITTNCYVDIPKVVRNTIREIGYDRAKYGFDCDTCAVMTSIDEQSSDIAMGVDKALEAKVGEMSEEQVQAIGAGDQGMMFGFACDETPELMPMPIILAHKLTMKLSEVRKNGKVKYLRPDGKSQVTVEYDGDKPVRVDTVVISTQHGADVSHDTIEKDIMEHVIIPVIPRELLDEGTKYFINPTGRFVVGGPQGDSGLTGRKIIVDTYGGYARHGGGAFSGKDPTKVDRSAAYAARYVAKNIVASGIARKCEVQLAYAIGVAKPVSVLVDTFGTAVIPEEKISELVNKHFDLRPAAIINKLNLRRPIYRKTAAYGHFGRDDAEFSWEKTDVADALRKEAGL</sequence>
<accession>B8I4C1</accession>
<gene>
    <name evidence="1" type="primary">metK</name>
    <name type="ordered locus">Ccel_0087</name>
</gene>
<protein>
    <recommendedName>
        <fullName evidence="1">S-adenosylmethionine synthase</fullName>
        <shortName evidence="1">AdoMet synthase</shortName>
        <ecNumber evidence="1">2.5.1.6</ecNumber>
    </recommendedName>
    <alternativeName>
        <fullName evidence="1">MAT</fullName>
    </alternativeName>
    <alternativeName>
        <fullName evidence="1">Methionine adenosyltransferase</fullName>
    </alternativeName>
</protein>